<organism>
    <name type="scientific">Arthroderma otae (strain ATCC MYA-4605 / CBS 113480)</name>
    <name type="common">Microsporum canis</name>
    <dbReference type="NCBI Taxonomy" id="554155"/>
    <lineage>
        <taxon>Eukaryota</taxon>
        <taxon>Fungi</taxon>
        <taxon>Dikarya</taxon>
        <taxon>Ascomycota</taxon>
        <taxon>Pezizomycotina</taxon>
        <taxon>Eurotiomycetes</taxon>
        <taxon>Eurotiomycetidae</taxon>
        <taxon>Onygenales</taxon>
        <taxon>Arthrodermataceae</taxon>
        <taxon>Microsporum</taxon>
    </lineage>
</organism>
<keyword id="KW-0325">Glycoprotein</keyword>
<keyword id="KW-0378">Hydrolase</keyword>
<keyword id="KW-0645">Protease</keyword>
<keyword id="KW-1185">Reference proteome</keyword>
<keyword id="KW-0964">Secreted</keyword>
<keyword id="KW-0720">Serine protease</keyword>
<keyword id="KW-0732">Signal</keyword>
<keyword id="KW-0843">Virulence</keyword>
<keyword id="KW-0865">Zymogen</keyword>
<proteinExistence type="inferred from homology"/>
<evidence type="ECO:0000250" key="1"/>
<evidence type="ECO:0000255" key="2"/>
<evidence type="ECO:0000255" key="3">
    <source>
        <dbReference type="PROSITE-ProRule" id="PRU01240"/>
    </source>
</evidence>
<evidence type="ECO:0000305" key="4"/>
<name>SUB2_ARTOC</name>
<reference key="1">
    <citation type="journal article" date="2012" name="MBio">
        <title>Comparative genome analysis of Trichophyton rubrum and related dermatophytes reveals candidate genes involved in infection.</title>
        <authorList>
            <person name="Martinez D.A."/>
            <person name="Oliver B.G."/>
            <person name="Graeser Y."/>
            <person name="Goldberg J.M."/>
            <person name="Li W."/>
            <person name="Martinez-Rossi N.M."/>
            <person name="Monod M."/>
            <person name="Shelest E."/>
            <person name="Barton R.C."/>
            <person name="Birch E."/>
            <person name="Brakhage A.A."/>
            <person name="Chen Z."/>
            <person name="Gurr S.J."/>
            <person name="Heiman D."/>
            <person name="Heitman J."/>
            <person name="Kosti I."/>
            <person name="Rossi A."/>
            <person name="Saif S."/>
            <person name="Samalova M."/>
            <person name="Saunders C.W."/>
            <person name="Shea T."/>
            <person name="Summerbell R.C."/>
            <person name="Xu J."/>
            <person name="Young S."/>
            <person name="Zeng Q."/>
            <person name="Birren B.W."/>
            <person name="Cuomo C.A."/>
            <person name="White T.C."/>
        </authorList>
    </citation>
    <scope>NUCLEOTIDE SEQUENCE [LARGE SCALE GENOMIC DNA]</scope>
    <source>
        <strain>ATCC MYA-4605 / CBS 113480</strain>
    </source>
</reference>
<accession>C5G168</accession>
<gene>
    <name type="primary">SUB2</name>
    <name type="ORF">MCYG_08690</name>
</gene>
<feature type="signal peptide" evidence="2">
    <location>
        <begin position="1"/>
        <end position="17"/>
    </location>
</feature>
<feature type="propeptide" id="PRO_0000384065" evidence="1">
    <location>
        <begin position="18"/>
        <end position="123"/>
    </location>
</feature>
<feature type="chain" id="PRO_0000384066" description="Subtilisin-like protease 2">
    <location>
        <begin position="124"/>
        <end position="423"/>
    </location>
</feature>
<feature type="domain" description="Inhibitor I9" evidence="2">
    <location>
        <begin position="37"/>
        <end position="123"/>
    </location>
</feature>
<feature type="domain" description="Peptidase S8" evidence="3">
    <location>
        <begin position="132"/>
        <end position="423"/>
    </location>
</feature>
<feature type="active site" description="Charge relay system" evidence="3">
    <location>
        <position position="170"/>
    </location>
</feature>
<feature type="active site" description="Charge relay system" evidence="3">
    <location>
        <position position="202"/>
    </location>
</feature>
<feature type="active site" description="Charge relay system" evidence="3">
    <location>
        <position position="358"/>
    </location>
</feature>
<feature type="glycosylation site" description="N-linked (GlcNAc...) asparagine" evidence="2">
    <location>
        <position position="249"/>
    </location>
</feature>
<feature type="glycosylation site" description="N-linked (GlcNAc...) asparagine" evidence="2">
    <location>
        <position position="262"/>
    </location>
</feature>
<feature type="glycosylation site" description="N-linked (GlcNAc...) asparagine" evidence="2">
    <location>
        <position position="349"/>
    </location>
</feature>
<feature type="glycosylation site" description="N-linked (GlcNAc...) asparagine" evidence="2">
    <location>
        <position position="389"/>
    </location>
</feature>
<dbReference type="EC" id="3.4.21.-"/>
<dbReference type="EMBL" id="DS995709">
    <property type="protein sequence ID" value="EEQ35871.1"/>
    <property type="molecule type" value="Genomic_DNA"/>
</dbReference>
<dbReference type="RefSeq" id="XP_002842859.1">
    <property type="nucleotide sequence ID" value="XM_002842813.1"/>
</dbReference>
<dbReference type="SMR" id="C5G168"/>
<dbReference type="STRING" id="554155.C5G168"/>
<dbReference type="GlyCosmos" id="C5G168">
    <property type="glycosylation" value="4 sites, No reported glycans"/>
</dbReference>
<dbReference type="GeneID" id="9224080"/>
<dbReference type="VEuPathDB" id="FungiDB:MCYG_08690"/>
<dbReference type="eggNOG" id="KOG1153">
    <property type="taxonomic scope" value="Eukaryota"/>
</dbReference>
<dbReference type="HOGENOM" id="CLU_011263_1_4_1"/>
<dbReference type="OMA" id="HADLEGH"/>
<dbReference type="OrthoDB" id="206201at2759"/>
<dbReference type="Proteomes" id="UP000002035">
    <property type="component" value="Unassembled WGS sequence"/>
</dbReference>
<dbReference type="GO" id="GO:0005576">
    <property type="term" value="C:extracellular region"/>
    <property type="evidence" value="ECO:0007669"/>
    <property type="project" value="UniProtKB-SubCell"/>
</dbReference>
<dbReference type="GO" id="GO:0004252">
    <property type="term" value="F:serine-type endopeptidase activity"/>
    <property type="evidence" value="ECO:0007669"/>
    <property type="project" value="InterPro"/>
</dbReference>
<dbReference type="GO" id="GO:0006508">
    <property type="term" value="P:proteolysis"/>
    <property type="evidence" value="ECO:0007669"/>
    <property type="project" value="UniProtKB-KW"/>
</dbReference>
<dbReference type="CDD" id="cd04077">
    <property type="entry name" value="Peptidases_S8_PCSK9_ProteinaseK_like"/>
    <property type="match status" value="1"/>
</dbReference>
<dbReference type="FunFam" id="3.40.50.200:FF:000007">
    <property type="entry name" value="Subtilisin-like serine protease"/>
    <property type="match status" value="1"/>
</dbReference>
<dbReference type="Gene3D" id="3.30.70.80">
    <property type="entry name" value="Peptidase S8 propeptide/proteinase inhibitor I9"/>
    <property type="match status" value="1"/>
</dbReference>
<dbReference type="Gene3D" id="3.40.50.200">
    <property type="entry name" value="Peptidase S8/S53 domain"/>
    <property type="match status" value="1"/>
</dbReference>
<dbReference type="InterPro" id="IPR034193">
    <property type="entry name" value="PCSK9_ProteinaseK-like"/>
</dbReference>
<dbReference type="InterPro" id="IPR000209">
    <property type="entry name" value="Peptidase_S8/S53_dom"/>
</dbReference>
<dbReference type="InterPro" id="IPR036852">
    <property type="entry name" value="Peptidase_S8/S53_dom_sf"/>
</dbReference>
<dbReference type="InterPro" id="IPR023827">
    <property type="entry name" value="Peptidase_S8_Asp-AS"/>
</dbReference>
<dbReference type="InterPro" id="IPR022398">
    <property type="entry name" value="Peptidase_S8_His-AS"/>
</dbReference>
<dbReference type="InterPro" id="IPR023828">
    <property type="entry name" value="Peptidase_S8_Ser-AS"/>
</dbReference>
<dbReference type="InterPro" id="IPR050131">
    <property type="entry name" value="Peptidase_S8_subtilisin-like"/>
</dbReference>
<dbReference type="InterPro" id="IPR015500">
    <property type="entry name" value="Peptidase_S8_subtilisin-rel"/>
</dbReference>
<dbReference type="InterPro" id="IPR010259">
    <property type="entry name" value="S8pro/Inhibitor_I9"/>
</dbReference>
<dbReference type="InterPro" id="IPR037045">
    <property type="entry name" value="S8pro/Inhibitor_I9_sf"/>
</dbReference>
<dbReference type="PANTHER" id="PTHR43806:SF58">
    <property type="entry name" value="ALKALINE PROTEASE 1-RELATED"/>
    <property type="match status" value="1"/>
</dbReference>
<dbReference type="PANTHER" id="PTHR43806">
    <property type="entry name" value="PEPTIDASE S8"/>
    <property type="match status" value="1"/>
</dbReference>
<dbReference type="Pfam" id="PF05922">
    <property type="entry name" value="Inhibitor_I9"/>
    <property type="match status" value="1"/>
</dbReference>
<dbReference type="Pfam" id="PF00082">
    <property type="entry name" value="Peptidase_S8"/>
    <property type="match status" value="1"/>
</dbReference>
<dbReference type="PRINTS" id="PR00723">
    <property type="entry name" value="SUBTILISIN"/>
</dbReference>
<dbReference type="SUPFAM" id="SSF52743">
    <property type="entry name" value="Subtilisin-like"/>
    <property type="match status" value="1"/>
</dbReference>
<dbReference type="PROSITE" id="PS51892">
    <property type="entry name" value="SUBTILASE"/>
    <property type="match status" value="1"/>
</dbReference>
<dbReference type="PROSITE" id="PS00136">
    <property type="entry name" value="SUBTILASE_ASP"/>
    <property type="match status" value="1"/>
</dbReference>
<dbReference type="PROSITE" id="PS00137">
    <property type="entry name" value="SUBTILASE_HIS"/>
    <property type="match status" value="1"/>
</dbReference>
<dbReference type="PROSITE" id="PS00138">
    <property type="entry name" value="SUBTILASE_SER"/>
    <property type="match status" value="1"/>
</dbReference>
<protein>
    <recommendedName>
        <fullName>Subtilisin-like protease 2</fullName>
        <ecNumber>3.4.21.-</ecNumber>
    </recommendedName>
</protein>
<sequence length="423" mass="45598">MQLLNLGLLLLLPFVAGEIAPQPEPLRAGPSDIVPGQYIVTLKEGLASAQIREHKKWVSSVHQANLDSFAAGASGVETVGIMKNFHIHNLNMYSGGFDDKTAEDLRRSPDVKSVHPDQHVYLAKTVTQPQARWGLGYMSSKGKPVPLHSTLVDYLYDDKAGEGVWAYVLDTGINVDHIEFEGRGILGHNAIPNKPHTDEFGHGTYVAGIIAGKTYGVAKKANVVSAKAFDTGSSTYNYILETYDWIVKNITDSNRKNKAVINLSISGAKYQPFDDAVENAFKAGITTVVAAGNDGKDAKNNTPASSPNAITVGAVRWENTRPSFSNYGKIVDIWAPGELIKSCWKGGNNATSTQSGTSAASPHVAGLVAYLMSLENLPSPSAVTARVLNLTIPNLVKDAKDSPNRVVYNGIQERKFTLPKNTK</sequence>
<comment type="function">
    <text evidence="1">Secreted subtilisin-like serine protease with keratinolytic activity that contributes to pathogenicity.</text>
</comment>
<comment type="subcellular location">
    <subcellularLocation>
        <location evidence="1">Secreted</location>
    </subcellularLocation>
</comment>
<comment type="similarity">
    <text evidence="4">Belongs to the peptidase S8 family.</text>
</comment>